<feature type="chain" id="PRO_0000169366" description="Uncharacterized protein YggE">
    <location>
        <begin position="1"/>
        <end position="246"/>
    </location>
</feature>
<keyword id="KW-1185">Reference proteome</keyword>
<protein>
    <recommendedName>
        <fullName>Uncharacterized protein YggE</fullName>
    </recommendedName>
</protein>
<organism>
    <name type="scientific">Shigella flexneri</name>
    <dbReference type="NCBI Taxonomy" id="623"/>
    <lineage>
        <taxon>Bacteria</taxon>
        <taxon>Pseudomonadati</taxon>
        <taxon>Pseudomonadota</taxon>
        <taxon>Gammaproteobacteria</taxon>
        <taxon>Enterobacterales</taxon>
        <taxon>Enterobacteriaceae</taxon>
        <taxon>Shigella</taxon>
    </lineage>
</organism>
<reference key="1">
    <citation type="journal article" date="2002" name="Nucleic Acids Res.">
        <title>Genome sequence of Shigella flexneri 2a: insights into pathogenicity through comparison with genomes of Escherichia coli K12 and O157.</title>
        <authorList>
            <person name="Jin Q."/>
            <person name="Yuan Z."/>
            <person name="Xu J."/>
            <person name="Wang Y."/>
            <person name="Shen Y."/>
            <person name="Lu W."/>
            <person name="Wang J."/>
            <person name="Liu H."/>
            <person name="Yang J."/>
            <person name="Yang F."/>
            <person name="Zhang X."/>
            <person name="Zhang J."/>
            <person name="Yang G."/>
            <person name="Wu H."/>
            <person name="Qu D."/>
            <person name="Dong J."/>
            <person name="Sun L."/>
            <person name="Xue Y."/>
            <person name="Zhao A."/>
            <person name="Gao Y."/>
            <person name="Zhu J."/>
            <person name="Kan B."/>
            <person name="Ding K."/>
            <person name="Chen S."/>
            <person name="Cheng H."/>
            <person name="Yao Z."/>
            <person name="He B."/>
            <person name="Chen R."/>
            <person name="Ma D."/>
            <person name="Qiang B."/>
            <person name="Wen Y."/>
            <person name="Hou Y."/>
            <person name="Yu J."/>
        </authorList>
    </citation>
    <scope>NUCLEOTIDE SEQUENCE [LARGE SCALE GENOMIC DNA]</scope>
    <source>
        <strain>301 / Serotype 2a</strain>
    </source>
</reference>
<reference key="2">
    <citation type="journal article" date="2003" name="Infect. Immun.">
        <title>Complete genome sequence and comparative genomics of Shigella flexneri serotype 2a strain 2457T.</title>
        <authorList>
            <person name="Wei J."/>
            <person name="Goldberg M.B."/>
            <person name="Burland V."/>
            <person name="Venkatesan M.M."/>
            <person name="Deng W."/>
            <person name="Fournier G."/>
            <person name="Mayhew G.F."/>
            <person name="Plunkett G. III"/>
            <person name="Rose D.J."/>
            <person name="Darling A."/>
            <person name="Mau B."/>
            <person name="Perna N.T."/>
            <person name="Payne S.M."/>
            <person name="Runyen-Janecky L.J."/>
            <person name="Zhou S."/>
            <person name="Schwartz D.C."/>
            <person name="Blattner F.R."/>
        </authorList>
    </citation>
    <scope>NUCLEOTIDE SEQUENCE [LARGE SCALE GENOMIC DNA]</scope>
    <source>
        <strain>ATCC 700930 / 2457T / Serotype 2a</strain>
    </source>
</reference>
<sequence length="246" mass="26635">MKFKVIALAALMGISGMAAQANELPDGPHIVTSGTASVDAVPDIATLAIEVNVAAKDAATAKKQADERVAQYISFLELNQIAKKDISSANLRTQPDYDYQDGKSILKGYRAVRTVEVTLRQLDKLNSLLDGALKAGLNEIRSVSLGVAQPDAYKDKARKAAIDNAIHQAQELANGFHRKLGPVYSVRYHVSNYQPSPMVRMMKADAAPVSAQETYEQAAIQFDDQVDVVFQLEPVDQQPAKTPAAQ</sequence>
<dbReference type="EMBL" id="AE005674">
    <property type="protein sequence ID" value="AAN44389.1"/>
    <property type="molecule type" value="Genomic_DNA"/>
</dbReference>
<dbReference type="EMBL" id="AE014073">
    <property type="protein sequence ID" value="AAP18211.1"/>
    <property type="molecule type" value="Genomic_DNA"/>
</dbReference>
<dbReference type="RefSeq" id="NP_708682.1">
    <property type="nucleotide sequence ID" value="NC_004337.2"/>
</dbReference>
<dbReference type="RefSeq" id="WP_000669834.1">
    <property type="nucleotide sequence ID" value="NZ_WPGW01000018.1"/>
</dbReference>
<dbReference type="SMR" id="P0ADS8"/>
<dbReference type="STRING" id="198214.SF2907"/>
<dbReference type="PaxDb" id="198214-SF2907"/>
<dbReference type="GeneID" id="1025894"/>
<dbReference type="KEGG" id="sfl:SF2907"/>
<dbReference type="KEGG" id="sfx:S3107"/>
<dbReference type="PATRIC" id="fig|198214.7.peg.3458"/>
<dbReference type="HOGENOM" id="CLU_080344_3_0_6"/>
<dbReference type="Proteomes" id="UP000001006">
    <property type="component" value="Chromosome"/>
</dbReference>
<dbReference type="Proteomes" id="UP000002673">
    <property type="component" value="Chromosome"/>
</dbReference>
<dbReference type="GO" id="GO:0006974">
    <property type="term" value="P:DNA damage response"/>
    <property type="evidence" value="ECO:0007669"/>
    <property type="project" value="TreeGrafter"/>
</dbReference>
<dbReference type="FunFam" id="3.30.110.170:FF:000001">
    <property type="entry name" value="Oxidative stress defense protein"/>
    <property type="match status" value="1"/>
</dbReference>
<dbReference type="FunFam" id="3.30.70.2970:FF:000001">
    <property type="entry name" value="Oxidative stress defense protein"/>
    <property type="match status" value="1"/>
</dbReference>
<dbReference type="Gene3D" id="3.30.110.170">
    <property type="entry name" value="Protein of unknown function (DUF541), domain 1"/>
    <property type="match status" value="1"/>
</dbReference>
<dbReference type="Gene3D" id="3.30.70.2970">
    <property type="entry name" value="Protein of unknown function (DUF541), domain 2"/>
    <property type="match status" value="1"/>
</dbReference>
<dbReference type="InterPro" id="IPR052022">
    <property type="entry name" value="26kDa_periplasmic_antigen"/>
</dbReference>
<dbReference type="InterPro" id="IPR007497">
    <property type="entry name" value="SIMPL/DUF541"/>
</dbReference>
<dbReference type="NCBIfam" id="NF008299">
    <property type="entry name" value="PRK11087.1"/>
    <property type="match status" value="1"/>
</dbReference>
<dbReference type="PANTHER" id="PTHR34387:SF1">
    <property type="entry name" value="PERIPLASMIC IMMUNOGENIC PROTEIN"/>
    <property type="match status" value="1"/>
</dbReference>
<dbReference type="PANTHER" id="PTHR34387">
    <property type="entry name" value="SLR1258 PROTEIN"/>
    <property type="match status" value="1"/>
</dbReference>
<dbReference type="Pfam" id="PF04402">
    <property type="entry name" value="SIMPL"/>
    <property type="match status" value="1"/>
</dbReference>
<name>YGGE_SHIFL</name>
<gene>
    <name type="primary">yggE</name>
    <name type="ordered locus">SF2907</name>
    <name type="ordered locus">S3107</name>
</gene>
<proteinExistence type="predicted"/>
<accession>P0ADS8</accession>
<accession>P11668</accession>